<accession>Q7X146</accession>
<reference key="1">
    <citation type="journal article" date="2003" name="Genes Cells">
        <title>A new staphylococcal sigma factor in the conserved gene cassette: functional significance and implication for the evolutionary processes.</title>
        <authorList>
            <person name="Morikawa K."/>
            <person name="Inose Y."/>
            <person name="Okamura H."/>
            <person name="Maruyama A."/>
            <person name="Hayashi H."/>
            <person name="Takeyasu K."/>
            <person name="Ohta T."/>
        </authorList>
    </citation>
    <scope>NUCLEOTIDE SEQUENCE [GENOMIC DNA]</scope>
    <source>
        <strain>GIFU 3170</strain>
    </source>
</reference>
<evidence type="ECO:0000255" key="1">
    <source>
        <dbReference type="HAMAP-Rule" id="MF_00294"/>
    </source>
</evidence>
<evidence type="ECO:0000305" key="2"/>
<feature type="chain" id="PRO_0000170236" description="Large ribosomal subunit protein bL33">
    <location>
        <begin position="1"/>
        <end position="47"/>
    </location>
</feature>
<comment type="similarity">
    <text evidence="1">Belongs to the bacterial ribosomal protein bL33 family.</text>
</comment>
<proteinExistence type="inferred from homology"/>
<keyword id="KW-0687">Ribonucleoprotein</keyword>
<keyword id="KW-0689">Ribosomal protein</keyword>
<protein>
    <recommendedName>
        <fullName evidence="1">Large ribosomal subunit protein bL33</fullName>
    </recommendedName>
    <alternativeName>
        <fullName evidence="2">50S ribosomal protein L33</fullName>
    </alternativeName>
</protein>
<organism>
    <name type="scientific">Staphylococcus saprophyticus</name>
    <dbReference type="NCBI Taxonomy" id="29385"/>
    <lineage>
        <taxon>Bacteria</taxon>
        <taxon>Bacillati</taxon>
        <taxon>Bacillota</taxon>
        <taxon>Bacilli</taxon>
        <taxon>Bacillales</taxon>
        <taxon>Staphylococcaceae</taxon>
        <taxon>Staphylococcus</taxon>
    </lineage>
</organism>
<dbReference type="EMBL" id="AY234838">
    <property type="protein sequence ID" value="AAO62600.1"/>
    <property type="molecule type" value="Genomic_DNA"/>
</dbReference>
<dbReference type="RefSeq" id="WP_011303843.1">
    <property type="nucleotide sequence ID" value="NZ_WSFL01000002.1"/>
</dbReference>
<dbReference type="SMR" id="Q7X146"/>
<dbReference type="STRING" id="29385.AL528_01205"/>
<dbReference type="GeneID" id="66868375"/>
<dbReference type="GO" id="GO:0005737">
    <property type="term" value="C:cytoplasm"/>
    <property type="evidence" value="ECO:0007669"/>
    <property type="project" value="UniProtKB-ARBA"/>
</dbReference>
<dbReference type="GO" id="GO:1990904">
    <property type="term" value="C:ribonucleoprotein complex"/>
    <property type="evidence" value="ECO:0007669"/>
    <property type="project" value="UniProtKB-KW"/>
</dbReference>
<dbReference type="GO" id="GO:0005840">
    <property type="term" value="C:ribosome"/>
    <property type="evidence" value="ECO:0007669"/>
    <property type="project" value="UniProtKB-KW"/>
</dbReference>
<dbReference type="GO" id="GO:0003735">
    <property type="term" value="F:structural constituent of ribosome"/>
    <property type="evidence" value="ECO:0007669"/>
    <property type="project" value="InterPro"/>
</dbReference>
<dbReference type="GO" id="GO:0006412">
    <property type="term" value="P:translation"/>
    <property type="evidence" value="ECO:0007669"/>
    <property type="project" value="UniProtKB-UniRule"/>
</dbReference>
<dbReference type="Gene3D" id="2.20.28.120">
    <property type="entry name" value="Ribosomal protein L33"/>
    <property type="match status" value="1"/>
</dbReference>
<dbReference type="HAMAP" id="MF_00294">
    <property type="entry name" value="Ribosomal_bL33"/>
    <property type="match status" value="1"/>
</dbReference>
<dbReference type="InterPro" id="IPR001705">
    <property type="entry name" value="Ribosomal_bL33"/>
</dbReference>
<dbReference type="InterPro" id="IPR018264">
    <property type="entry name" value="Ribosomal_bL33_CS"/>
</dbReference>
<dbReference type="InterPro" id="IPR038584">
    <property type="entry name" value="Ribosomal_bL33_sf"/>
</dbReference>
<dbReference type="InterPro" id="IPR011332">
    <property type="entry name" value="Ribosomal_zn-bd"/>
</dbReference>
<dbReference type="NCBIfam" id="NF001764">
    <property type="entry name" value="PRK00504.1"/>
    <property type="match status" value="1"/>
</dbReference>
<dbReference type="NCBIfam" id="TIGR01023">
    <property type="entry name" value="rpmG_bact"/>
    <property type="match status" value="1"/>
</dbReference>
<dbReference type="Pfam" id="PF00471">
    <property type="entry name" value="Ribosomal_L33"/>
    <property type="match status" value="1"/>
</dbReference>
<dbReference type="SUPFAM" id="SSF57829">
    <property type="entry name" value="Zn-binding ribosomal proteins"/>
    <property type="match status" value="1"/>
</dbReference>
<dbReference type="PROSITE" id="PS00582">
    <property type="entry name" value="RIBOSOMAL_L33"/>
    <property type="match status" value="1"/>
</dbReference>
<name>RL33_STASA</name>
<gene>
    <name evidence="1" type="primary">rpmG</name>
</gene>
<sequence length="47" mass="5444">MKKVPLNCEVCGNRNYNVPKQSNLASRLELKKYCPRCNAHTLHKESK</sequence>